<proteinExistence type="inferred from homology"/>
<name>ENGB_UREU1</name>
<reference key="1">
    <citation type="submission" date="2008-10" db="EMBL/GenBank/DDBJ databases">
        <title>Genome sequence of Ureaplasma urealyticum serovar 10 ATCC-33699.</title>
        <authorList>
            <person name="Shrivastava S."/>
            <person name="Methe B.A."/>
            <person name="Glass J."/>
            <person name="White K."/>
            <person name="Duffy L.B."/>
        </authorList>
    </citation>
    <scope>NUCLEOTIDE SEQUENCE [LARGE SCALE GENOMIC DNA]</scope>
    <source>
        <strain>ATCC 33699 / Western</strain>
    </source>
</reference>
<protein>
    <recommendedName>
        <fullName evidence="1">Probable GTP-binding protein EngB</fullName>
    </recommendedName>
</protein>
<organism>
    <name type="scientific">Ureaplasma urealyticum serovar 10 (strain ATCC 33699 / Western)</name>
    <dbReference type="NCBI Taxonomy" id="565575"/>
    <lineage>
        <taxon>Bacteria</taxon>
        <taxon>Bacillati</taxon>
        <taxon>Mycoplasmatota</taxon>
        <taxon>Mycoplasmoidales</taxon>
        <taxon>Mycoplasmoidaceae</taxon>
        <taxon>Ureaplasma</taxon>
    </lineage>
</organism>
<keyword id="KW-0131">Cell cycle</keyword>
<keyword id="KW-0132">Cell division</keyword>
<keyword id="KW-0342">GTP-binding</keyword>
<keyword id="KW-0460">Magnesium</keyword>
<keyword id="KW-0479">Metal-binding</keyword>
<keyword id="KW-0547">Nucleotide-binding</keyword>
<keyword id="KW-0717">Septation</keyword>
<evidence type="ECO:0000255" key="1">
    <source>
        <dbReference type="HAMAP-Rule" id="MF_00321"/>
    </source>
</evidence>
<accession>B5ZB76</accession>
<sequence length="208" mass="23938">MAKFIKSAQYFDQYPVDKQFEICVIGRSNVGKSSLINALANEKIARTSNTPGRTQLVNFFDFNSFRLVDLPGYGFARVSKDKQLDLATIIDQYLGYRQNLCAVFQICDINVLTNDDVEMSRYFENQNYAHFVVLNKVDKVNKSHFDNNKQKIAKFLNISVDRLLCVSAQKNTNVATLFALMKKVVIETRQKQLLLKKEEKKSSEEEIK</sequence>
<feature type="chain" id="PRO_1000116013" description="Probable GTP-binding protein EngB">
    <location>
        <begin position="1"/>
        <end position="208"/>
    </location>
</feature>
<feature type="domain" description="EngB-type G" evidence="1">
    <location>
        <begin position="18"/>
        <end position="187"/>
    </location>
</feature>
<feature type="binding site" evidence="1">
    <location>
        <begin position="26"/>
        <end position="33"/>
    </location>
    <ligand>
        <name>GTP</name>
        <dbReference type="ChEBI" id="CHEBI:37565"/>
    </ligand>
</feature>
<feature type="binding site" evidence="1">
    <location>
        <position position="33"/>
    </location>
    <ligand>
        <name>Mg(2+)</name>
        <dbReference type="ChEBI" id="CHEBI:18420"/>
    </ligand>
</feature>
<feature type="binding site" evidence="1">
    <location>
        <begin position="52"/>
        <end position="56"/>
    </location>
    <ligand>
        <name>GTP</name>
        <dbReference type="ChEBI" id="CHEBI:37565"/>
    </ligand>
</feature>
<feature type="binding site" evidence="1">
    <location>
        <position position="54"/>
    </location>
    <ligand>
        <name>Mg(2+)</name>
        <dbReference type="ChEBI" id="CHEBI:18420"/>
    </ligand>
</feature>
<feature type="binding site" evidence="1">
    <location>
        <begin position="69"/>
        <end position="72"/>
    </location>
    <ligand>
        <name>GTP</name>
        <dbReference type="ChEBI" id="CHEBI:37565"/>
    </ligand>
</feature>
<feature type="binding site" evidence="1">
    <location>
        <begin position="135"/>
        <end position="138"/>
    </location>
    <ligand>
        <name>GTP</name>
        <dbReference type="ChEBI" id="CHEBI:37565"/>
    </ligand>
</feature>
<feature type="binding site" evidence="1">
    <location>
        <begin position="166"/>
        <end position="168"/>
    </location>
    <ligand>
        <name>GTP</name>
        <dbReference type="ChEBI" id="CHEBI:37565"/>
    </ligand>
</feature>
<dbReference type="EMBL" id="CP001184">
    <property type="protein sequence ID" value="ACI60039.1"/>
    <property type="molecule type" value="Genomic_DNA"/>
</dbReference>
<dbReference type="SMR" id="B5ZB76"/>
<dbReference type="STRING" id="565575.UUR10_0262"/>
<dbReference type="KEGG" id="uue:UUR10_0262"/>
<dbReference type="eggNOG" id="COG0218">
    <property type="taxonomic scope" value="Bacteria"/>
</dbReference>
<dbReference type="HOGENOM" id="CLU_033732_3_2_14"/>
<dbReference type="OrthoDB" id="9804921at2"/>
<dbReference type="Proteomes" id="UP000002018">
    <property type="component" value="Chromosome"/>
</dbReference>
<dbReference type="GO" id="GO:0005829">
    <property type="term" value="C:cytosol"/>
    <property type="evidence" value="ECO:0007669"/>
    <property type="project" value="TreeGrafter"/>
</dbReference>
<dbReference type="GO" id="GO:0005525">
    <property type="term" value="F:GTP binding"/>
    <property type="evidence" value="ECO:0007669"/>
    <property type="project" value="UniProtKB-UniRule"/>
</dbReference>
<dbReference type="GO" id="GO:0046872">
    <property type="term" value="F:metal ion binding"/>
    <property type="evidence" value="ECO:0007669"/>
    <property type="project" value="UniProtKB-KW"/>
</dbReference>
<dbReference type="GO" id="GO:0000917">
    <property type="term" value="P:division septum assembly"/>
    <property type="evidence" value="ECO:0007669"/>
    <property type="project" value="UniProtKB-KW"/>
</dbReference>
<dbReference type="CDD" id="cd01876">
    <property type="entry name" value="YihA_EngB"/>
    <property type="match status" value="1"/>
</dbReference>
<dbReference type="Gene3D" id="3.40.50.300">
    <property type="entry name" value="P-loop containing nucleotide triphosphate hydrolases"/>
    <property type="match status" value="1"/>
</dbReference>
<dbReference type="HAMAP" id="MF_00321">
    <property type="entry name" value="GTPase_EngB"/>
    <property type="match status" value="1"/>
</dbReference>
<dbReference type="InterPro" id="IPR030393">
    <property type="entry name" value="G_ENGB_dom"/>
</dbReference>
<dbReference type="InterPro" id="IPR006073">
    <property type="entry name" value="GTP-bd"/>
</dbReference>
<dbReference type="InterPro" id="IPR019987">
    <property type="entry name" value="GTP-bd_ribosome_bio_YsxC"/>
</dbReference>
<dbReference type="InterPro" id="IPR027417">
    <property type="entry name" value="P-loop_NTPase"/>
</dbReference>
<dbReference type="InterPro" id="IPR005225">
    <property type="entry name" value="Small_GTP-bd"/>
</dbReference>
<dbReference type="NCBIfam" id="TIGR03598">
    <property type="entry name" value="GTPase_YsxC"/>
    <property type="match status" value="1"/>
</dbReference>
<dbReference type="NCBIfam" id="TIGR00231">
    <property type="entry name" value="small_GTP"/>
    <property type="match status" value="1"/>
</dbReference>
<dbReference type="PANTHER" id="PTHR11649:SF13">
    <property type="entry name" value="ENGB-TYPE G DOMAIN-CONTAINING PROTEIN"/>
    <property type="match status" value="1"/>
</dbReference>
<dbReference type="PANTHER" id="PTHR11649">
    <property type="entry name" value="MSS1/TRME-RELATED GTP-BINDING PROTEIN"/>
    <property type="match status" value="1"/>
</dbReference>
<dbReference type="Pfam" id="PF01926">
    <property type="entry name" value="MMR_HSR1"/>
    <property type="match status" value="1"/>
</dbReference>
<dbReference type="PRINTS" id="PR00449">
    <property type="entry name" value="RASTRNSFRMNG"/>
</dbReference>
<dbReference type="SUPFAM" id="SSF52540">
    <property type="entry name" value="P-loop containing nucleoside triphosphate hydrolases"/>
    <property type="match status" value="1"/>
</dbReference>
<dbReference type="PROSITE" id="PS51706">
    <property type="entry name" value="G_ENGB"/>
    <property type="match status" value="1"/>
</dbReference>
<gene>
    <name evidence="1" type="primary">engB</name>
    <name type="ordered locus">UUR10_0262</name>
</gene>
<comment type="function">
    <text evidence="1">Necessary for normal cell division and for the maintenance of normal septation.</text>
</comment>
<comment type="cofactor">
    <cofactor evidence="1">
        <name>Mg(2+)</name>
        <dbReference type="ChEBI" id="CHEBI:18420"/>
    </cofactor>
</comment>
<comment type="similarity">
    <text evidence="1">Belongs to the TRAFAC class TrmE-Era-EngA-EngB-Septin-like GTPase superfamily. EngB GTPase family.</text>
</comment>